<proteinExistence type="evidence at protein level"/>
<keyword id="KW-0413">Isomerase</keyword>
<gene>
    <name evidence="5" type="ordered locus">Arad_8151</name>
</gene>
<protein>
    <recommendedName>
        <fullName evidence="3">4-hydroxyproline 2-epimerase 2</fullName>
        <shortName>4Hyp 2-epimerase 2</shortName>
        <shortName evidence="3">4HypE 2</shortName>
        <ecNumber evidence="2">5.1.1.8</ecNumber>
    </recommendedName>
</protein>
<dbReference type="EC" id="5.1.1.8" evidence="2"/>
<dbReference type="EMBL" id="CP000629">
    <property type="protein sequence ID" value="ACM29488.1"/>
    <property type="molecule type" value="Genomic_DNA"/>
</dbReference>
<dbReference type="RefSeq" id="WP_012649794.1">
    <property type="nucleotide sequence ID" value="NC_011983.1"/>
</dbReference>
<dbReference type="SMR" id="B9JHU6"/>
<dbReference type="STRING" id="311403.Arad_8151"/>
<dbReference type="KEGG" id="ara:Arad_8151"/>
<dbReference type="eggNOG" id="COG3938">
    <property type="taxonomic scope" value="Bacteria"/>
</dbReference>
<dbReference type="HOGENOM" id="CLU_036729_0_0_5"/>
<dbReference type="Proteomes" id="UP000001600">
    <property type="component" value="Chromosome 2"/>
</dbReference>
<dbReference type="GO" id="GO:0047580">
    <property type="term" value="F:4-hydroxyproline epimerase activity"/>
    <property type="evidence" value="ECO:0007669"/>
    <property type="project" value="UniProtKB-EC"/>
</dbReference>
<dbReference type="GO" id="GO:0050346">
    <property type="term" value="F:trans-L-3-hydroxyproline dehydratase activity"/>
    <property type="evidence" value="ECO:0007669"/>
    <property type="project" value="UniProtKB-ARBA"/>
</dbReference>
<dbReference type="FunFam" id="3.10.310.10:FF:000005">
    <property type="entry name" value="Proline racemase"/>
    <property type="match status" value="1"/>
</dbReference>
<dbReference type="Gene3D" id="3.10.310.10">
    <property type="entry name" value="Diaminopimelate Epimerase, Chain A, domain 1"/>
    <property type="match status" value="2"/>
</dbReference>
<dbReference type="InterPro" id="IPR008794">
    <property type="entry name" value="Pro_racemase_fam"/>
</dbReference>
<dbReference type="NCBIfam" id="NF010578">
    <property type="entry name" value="PRK13971.1"/>
    <property type="match status" value="1"/>
</dbReference>
<dbReference type="PANTHER" id="PTHR33442:SF5">
    <property type="entry name" value="BIFUNCTIONAL TRANS-3-HYDROXY-L-PROLINE DEHYDRATASE_2-EPIMERASE"/>
    <property type="match status" value="1"/>
</dbReference>
<dbReference type="PANTHER" id="PTHR33442">
    <property type="entry name" value="TRANS-3-HYDROXY-L-PROLINE DEHYDRATASE"/>
    <property type="match status" value="1"/>
</dbReference>
<dbReference type="Pfam" id="PF05544">
    <property type="entry name" value="Pro_racemase"/>
    <property type="match status" value="1"/>
</dbReference>
<dbReference type="PIRSF" id="PIRSF029792">
    <property type="entry name" value="Pro_racemase"/>
    <property type="match status" value="1"/>
</dbReference>
<dbReference type="SFLD" id="SFLDS00028">
    <property type="entry name" value="Proline_Racemase"/>
    <property type="match status" value="1"/>
</dbReference>
<dbReference type="SUPFAM" id="SSF54506">
    <property type="entry name" value="Diaminopimelate epimerase-like"/>
    <property type="match status" value="1"/>
</dbReference>
<sequence length="332" mass="35677">MRRSFFCIDSHTCGNPVRVVAGGGPLLPHVSMAERREIFVRDHDWVRKALMFEPRGHDIMSGAIIYPSVREDCDFAALFIEVSGCLPMCGAGTIGLATVAIEEGLITPRVPGRLSIETPAGKVDVDYQLKDGFVEAVRLFNVASYLHSRDVVVDVSGLGSLSVDIAYGGNFYAVIEPQENWSGLDGMSASDIVTLSQRLRDALSVVCDPVHPDDERIRGVHHAIWCDAAGSENADGRGAVFYGDKAIDRSPGGTGTSARMAQLYGRGRLGIGDSFRNESLIGTVFEGRIEGAALVGGIPGILPSIGGWARVIGHNTIFVDERDPLAHGFQIR</sequence>
<name>4HPE2_RHIR8</name>
<reference key="1">
    <citation type="journal article" date="2009" name="J. Bacteriol.">
        <title>Genome sequences of three Agrobacterium biovars help elucidate the evolution of multichromosome genomes in bacteria.</title>
        <authorList>
            <person name="Slater S.C."/>
            <person name="Goldman B.S."/>
            <person name="Goodner B."/>
            <person name="Setubal J.C."/>
            <person name="Farrand S.K."/>
            <person name="Nester E.W."/>
            <person name="Burr T.J."/>
            <person name="Banta L."/>
            <person name="Dickerman A.W."/>
            <person name="Paulsen I."/>
            <person name="Otten L."/>
            <person name="Suen G."/>
            <person name="Welch R."/>
            <person name="Almeida N.F."/>
            <person name="Arnold F."/>
            <person name="Burton O.T."/>
            <person name="Du Z."/>
            <person name="Ewing A."/>
            <person name="Godsy E."/>
            <person name="Heisel S."/>
            <person name="Houmiel K.L."/>
            <person name="Jhaveri J."/>
            <person name="Lu J."/>
            <person name="Miller N.M."/>
            <person name="Norton S."/>
            <person name="Chen Q."/>
            <person name="Phoolcharoen W."/>
            <person name="Ohlin V."/>
            <person name="Ondrusek D."/>
            <person name="Pride N."/>
            <person name="Stricklin S.L."/>
            <person name="Sun J."/>
            <person name="Wheeler C."/>
            <person name="Wilson L."/>
            <person name="Zhu H."/>
            <person name="Wood D.W."/>
        </authorList>
    </citation>
    <scope>NUCLEOTIDE SEQUENCE [LARGE SCALE GENOMIC DNA]</scope>
    <source>
        <strain>K84 / ATCC BAA-868</strain>
    </source>
</reference>
<reference key="2">
    <citation type="journal article" date="2014" name="Elife">
        <title>Prediction and characterization of enzymatic activities guided by sequence similarity and genome neighborhood networks.</title>
        <authorList>
            <person name="Zhao S."/>
            <person name="Sakai A."/>
            <person name="Zhang X."/>
            <person name="Vetting M.W."/>
            <person name="Kumar R."/>
            <person name="Hillerich B."/>
            <person name="San Francisco B."/>
            <person name="Solbiati J."/>
            <person name="Steves A."/>
            <person name="Brown S."/>
            <person name="Akiva E."/>
            <person name="Barber A."/>
            <person name="Seidel R.D."/>
            <person name="Babbitt P.C."/>
            <person name="Almo S.C."/>
            <person name="Gerlt J.A."/>
            <person name="Jacobson M.P."/>
        </authorList>
    </citation>
    <scope>FUNCTION</scope>
    <scope>CATALYTIC ACTIVITY</scope>
</reference>
<evidence type="ECO:0000250" key="1">
    <source>
        <dbReference type="UniProtKB" id="Q4KGU2"/>
    </source>
</evidence>
<evidence type="ECO:0000269" key="2">
    <source>
    </source>
</evidence>
<evidence type="ECO:0000303" key="3">
    <source>
    </source>
</evidence>
<evidence type="ECO:0000305" key="4"/>
<evidence type="ECO:0000312" key="5">
    <source>
        <dbReference type="EMBL" id="ACM29488.1"/>
    </source>
</evidence>
<organism>
    <name type="scientific">Rhizobium rhizogenes (strain K84 / ATCC BAA-868)</name>
    <name type="common">Agrobacterium radiobacter</name>
    <dbReference type="NCBI Taxonomy" id="311403"/>
    <lineage>
        <taxon>Bacteria</taxon>
        <taxon>Pseudomonadati</taxon>
        <taxon>Pseudomonadota</taxon>
        <taxon>Alphaproteobacteria</taxon>
        <taxon>Hyphomicrobiales</taxon>
        <taxon>Rhizobiaceae</taxon>
        <taxon>Rhizobium/Agrobacterium group</taxon>
        <taxon>Rhizobium</taxon>
    </lineage>
</organism>
<accession>B9JHU6</accession>
<feature type="chain" id="PRO_0000432279" description="4-hydroxyproline 2-epimerase 2">
    <location>
        <begin position="1"/>
        <end position="332"/>
    </location>
</feature>
<feature type="active site" description="Proton acceptor" evidence="1">
    <location>
        <position position="89"/>
    </location>
</feature>
<feature type="binding site" evidence="1">
    <location>
        <position position="222"/>
    </location>
    <ligand>
        <name>substrate</name>
    </ligand>
</feature>
<feature type="binding site" evidence="1">
    <location>
        <position position="248"/>
    </location>
    <ligand>
        <name>substrate</name>
    </ligand>
</feature>
<feature type="binding site" evidence="1">
    <location>
        <begin position="253"/>
        <end position="254"/>
    </location>
    <ligand>
        <name>substrate</name>
    </ligand>
</feature>
<comment type="function">
    <text evidence="2">Catalyzes the epimerization of trans-4-hydroxy-L-proline (t4LHyp) to cis-4-hydroxy-D-proline (c4DHyp). Is likely involved in a degradation pathway that converts t4LHyp to alpha-ketoglutarate. Displays no proline racemase activity.</text>
</comment>
<comment type="catalytic activity">
    <reaction evidence="2">
        <text>trans-4-hydroxy-L-proline = cis-4-hydroxy-D-proline</text>
        <dbReference type="Rhea" id="RHEA:21152"/>
        <dbReference type="ChEBI" id="CHEBI:57690"/>
        <dbReference type="ChEBI" id="CHEBI:58375"/>
        <dbReference type="EC" id="5.1.1.8"/>
    </reaction>
</comment>
<comment type="similarity">
    <text evidence="4">Belongs to the proline racemase family.</text>
</comment>